<sequence length="127" mass="15054">MFIKFKISNRPIAPHLLVYTPQLSSLFSIWHRISGVGLAFFFTTFLIFIRIILSSNFACNLLTLISFEISQWIIIYFNLFILLFLFYHLFNGTRHIIWDFGFLLDIKYLSKFSLFLLVSLSLILIFQ</sequence>
<proteinExistence type="inferred from homology"/>
<organism>
    <name type="scientific">Chondrus crispus</name>
    <name type="common">Carrageen Irish moss</name>
    <name type="synonym">Polymorpha crispa</name>
    <dbReference type="NCBI Taxonomy" id="2769"/>
    <lineage>
        <taxon>Eukaryota</taxon>
        <taxon>Rhodophyta</taxon>
        <taxon>Florideophyceae</taxon>
        <taxon>Rhodymeniophycidae</taxon>
        <taxon>Gigartinales</taxon>
        <taxon>Gigartinaceae</taxon>
        <taxon>Chondrus</taxon>
    </lineage>
</organism>
<comment type="function">
    <text evidence="1">Membrane-anchoring subunit of succinate dehydrogenase (SDH) that is involved in complex II of the mitochondrial electron transport chain and is responsible for transferring electrons from succinate to ubiquinone (coenzyme Q).</text>
</comment>
<comment type="cofactor">
    <cofactor evidence="1">
        <name>heme</name>
        <dbReference type="ChEBI" id="CHEBI:30413"/>
    </cofactor>
    <text evidence="1">The heme is bound between the two transmembrane subunits.</text>
</comment>
<comment type="pathway">
    <text>Carbohydrate metabolism; tricarboxylic acid cycle.</text>
</comment>
<comment type="subunit">
    <text>Forms part of complex II containing four subunits: a 70 kDa flavoprotein (FP), a 27 kDa iron-sulfur protein (IP), a cytochrome B and a membrane-anchoring protein.</text>
</comment>
<comment type="subcellular location">
    <subcellularLocation>
        <location evidence="1">Mitochondrion inner membrane</location>
        <topology evidence="1">Multi-pass membrane protein</topology>
    </subcellularLocation>
</comment>
<comment type="similarity">
    <text evidence="3">Belongs to the cytochrome b560 family.</text>
</comment>
<evidence type="ECO:0000250" key="1"/>
<evidence type="ECO:0000255" key="2"/>
<evidence type="ECO:0000305" key="3"/>
<geneLocation type="mitochondrion"/>
<gene>
    <name type="primary">SDH3</name>
    <name type="synonym">SDHC</name>
</gene>
<accession>P48934</accession>
<name>C560_CHOCR</name>
<protein>
    <recommendedName>
        <fullName>Succinate dehydrogenase cytochrome b560 subunit</fullName>
    </recommendedName>
    <alternativeName>
        <fullName>Succinate dehydrogenase, subunit III</fullName>
    </alternativeName>
</protein>
<feature type="chain" id="PRO_0000203517" description="Succinate dehydrogenase cytochrome b560 subunit">
    <location>
        <begin position="1"/>
        <end position="127"/>
    </location>
</feature>
<feature type="transmembrane region" description="Helical" evidence="2">
    <location>
        <begin position="36"/>
        <end position="53"/>
    </location>
</feature>
<feature type="transmembrane region" description="Helical" evidence="2">
    <location>
        <begin position="60"/>
        <end position="83"/>
    </location>
</feature>
<feature type="transmembrane region" description="Helical" evidence="2">
    <location>
        <begin position="109"/>
        <end position="126"/>
    </location>
</feature>
<feature type="binding site" description="axial binding residue" evidence="1">
    <location>
        <position position="88"/>
    </location>
    <ligand>
        <name>heme</name>
        <dbReference type="ChEBI" id="CHEBI:30413"/>
        <note>ligand shared with second transmembrane subunit</note>
    </ligand>
    <ligandPart>
        <name>Fe</name>
        <dbReference type="ChEBI" id="CHEBI:18248"/>
    </ligandPart>
</feature>
<dbReference type="EMBL" id="Z47547">
    <property type="protein sequence ID" value="CAA87612.1"/>
    <property type="molecule type" value="Genomic_DNA"/>
</dbReference>
<dbReference type="PIR" id="S59115">
    <property type="entry name" value="S59115"/>
</dbReference>
<dbReference type="RefSeq" id="NP_062489.1">
    <property type="nucleotide sequence ID" value="NC_001677.2"/>
</dbReference>
<dbReference type="SMR" id="P48934"/>
<dbReference type="GeneID" id="809393"/>
<dbReference type="KEGG" id="ccp:ChcroMp10"/>
<dbReference type="UniPathway" id="UPA00223"/>
<dbReference type="GO" id="GO:0005743">
    <property type="term" value="C:mitochondrial inner membrane"/>
    <property type="evidence" value="ECO:0007669"/>
    <property type="project" value="UniProtKB-SubCell"/>
</dbReference>
<dbReference type="GO" id="GO:0009055">
    <property type="term" value="F:electron transfer activity"/>
    <property type="evidence" value="ECO:0007669"/>
    <property type="project" value="InterPro"/>
</dbReference>
<dbReference type="GO" id="GO:0046872">
    <property type="term" value="F:metal ion binding"/>
    <property type="evidence" value="ECO:0007669"/>
    <property type="project" value="UniProtKB-KW"/>
</dbReference>
<dbReference type="GO" id="GO:0006121">
    <property type="term" value="P:mitochondrial electron transport, succinate to ubiquinone"/>
    <property type="evidence" value="ECO:0007669"/>
    <property type="project" value="TreeGrafter"/>
</dbReference>
<dbReference type="GO" id="GO:0006099">
    <property type="term" value="P:tricarboxylic acid cycle"/>
    <property type="evidence" value="ECO:0007669"/>
    <property type="project" value="UniProtKB-UniPathway"/>
</dbReference>
<dbReference type="Gene3D" id="1.20.1300.10">
    <property type="entry name" value="Fumarate reductase/succinate dehydrogenase, transmembrane subunit"/>
    <property type="match status" value="1"/>
</dbReference>
<dbReference type="InterPro" id="IPR034804">
    <property type="entry name" value="SQR/QFR_C/D"/>
</dbReference>
<dbReference type="InterPro" id="IPR018495">
    <property type="entry name" value="Succ_DH_cyt_bsu_CS"/>
</dbReference>
<dbReference type="InterPro" id="IPR014314">
    <property type="entry name" value="Succ_DH_cytb556"/>
</dbReference>
<dbReference type="InterPro" id="IPR000701">
    <property type="entry name" value="SuccDH_FuR_B_TM-su"/>
</dbReference>
<dbReference type="NCBIfam" id="TIGR02970">
    <property type="entry name" value="succ_dehyd_cytB"/>
    <property type="match status" value="1"/>
</dbReference>
<dbReference type="PANTHER" id="PTHR10978">
    <property type="entry name" value="SUCCINATE DEHYDROGENASE CYTOCHROME B560 SUBUNIT"/>
    <property type="match status" value="1"/>
</dbReference>
<dbReference type="PANTHER" id="PTHR10978:SF5">
    <property type="entry name" value="SUCCINATE DEHYDROGENASE CYTOCHROME B560 SUBUNIT, MITOCHONDRIAL"/>
    <property type="match status" value="1"/>
</dbReference>
<dbReference type="Pfam" id="PF01127">
    <property type="entry name" value="Sdh_cyt"/>
    <property type="match status" value="1"/>
</dbReference>
<dbReference type="PIRSF" id="PIRSF000178">
    <property type="entry name" value="SDH_cyt_b560"/>
    <property type="match status" value="1"/>
</dbReference>
<dbReference type="SUPFAM" id="SSF81343">
    <property type="entry name" value="Fumarate reductase respiratory complex transmembrane subunits"/>
    <property type="match status" value="1"/>
</dbReference>
<dbReference type="PROSITE" id="PS01000">
    <property type="entry name" value="SDH_CYT_1"/>
    <property type="match status" value="1"/>
</dbReference>
<dbReference type="PROSITE" id="PS01001">
    <property type="entry name" value="SDH_CYT_2"/>
    <property type="match status" value="1"/>
</dbReference>
<reference key="1">
    <citation type="journal article" date="1996" name="Curr. Genet.">
        <title>Genes for two subunits of succinate dehydrogenase form a cluster on the mitochondrial genome of Rhodophyta.</title>
        <authorList>
            <person name="Viehmann S."/>
            <person name="Richard O."/>
            <person name="Boyen C."/>
            <person name="Zetsche K."/>
        </authorList>
    </citation>
    <scope>NUCLEOTIDE SEQUENCE [GENOMIC DNA]</scope>
</reference>
<reference key="2">
    <citation type="journal article" date="1995" name="J. Mol. Biol.">
        <title>Complete sequence of the mitochondrial DNA of the rhodophyte Chondrus crispus (Gigartinales). Gene content and genome organization.</title>
        <authorList>
            <person name="Leblanc C."/>
            <person name="Boyen C."/>
            <person name="Richard O."/>
            <person name="Bonnard G."/>
            <person name="Grienenberger J.-M."/>
            <person name="Kloareg B."/>
        </authorList>
    </citation>
    <scope>NUCLEOTIDE SEQUENCE [GENOMIC DNA]</scope>
    <source>
        <tissue>Apices</tissue>
    </source>
</reference>
<keyword id="KW-0249">Electron transport</keyword>
<keyword id="KW-0349">Heme</keyword>
<keyword id="KW-0408">Iron</keyword>
<keyword id="KW-0472">Membrane</keyword>
<keyword id="KW-0479">Metal-binding</keyword>
<keyword id="KW-0496">Mitochondrion</keyword>
<keyword id="KW-0999">Mitochondrion inner membrane</keyword>
<keyword id="KW-0812">Transmembrane</keyword>
<keyword id="KW-1133">Transmembrane helix</keyword>
<keyword id="KW-0813">Transport</keyword>
<keyword id="KW-0816">Tricarboxylic acid cycle</keyword>